<reference key="1">
    <citation type="journal article" date="1992" name="Mol. Cell. Biol.">
        <title>Isolation of rsp-1, a novel cDNA capable of suppressing v-Ras transformation.</title>
        <authorList>
            <person name="Cutler M.L."/>
            <person name="Bassin R.H."/>
            <person name="Zanoni L."/>
            <person name="Talbot N."/>
        </authorList>
    </citation>
    <scope>NUCLEOTIDE SEQUENCE [MRNA]</scope>
    <source>
        <strain>NIH Swiss</strain>
        <tissue>Fibroblast</tissue>
    </source>
</reference>
<reference key="2">
    <citation type="journal article" date="2010" name="Cell">
        <title>A tissue-specific atlas of mouse protein phosphorylation and expression.</title>
        <authorList>
            <person name="Huttlin E.L."/>
            <person name="Jedrychowski M.P."/>
            <person name="Elias J.E."/>
            <person name="Goswami T."/>
            <person name="Rad R."/>
            <person name="Beausoleil S.A."/>
            <person name="Villen J."/>
            <person name="Haas W."/>
            <person name="Sowa M.E."/>
            <person name="Gygi S.P."/>
        </authorList>
    </citation>
    <scope>IDENTIFICATION BY MASS SPECTROMETRY [LARGE SCALE ANALYSIS]</scope>
    <source>
        <tissue>Brain</tissue>
        <tissue>Brown adipose tissue</tissue>
        <tissue>Heart</tissue>
        <tissue>Kidney</tissue>
        <tissue>Liver</tissue>
        <tissue>Lung</tissue>
        <tissue>Pancreas</tissue>
        <tissue>Spleen</tissue>
        <tissue>Testis</tissue>
    </source>
</reference>
<gene>
    <name type="primary">Rsu1</name>
    <name type="synonym">Rsp1</name>
</gene>
<sequence>MSKSLKKLVEESREKNQPEVDMSDRGISSMLDVNGLFSLAHITQLVLSHNKLTTVPPNVAELKNLEVLNFFNNQIEELPTQISSLQKLKHLNLGMNRLNTLPRGFGSSRLLEVLELTYNNLNEHSLPGNFFYLTTLRALYLSDNDFEILPPDIGKLTKLQILSLRDNDLISLPKEIGELTQLKELHIQGNRLTVLPPELGNLDLTGQKQVFKAENNPWVTPIADQFQLGVSHVFEYIRSETYKYLYGRHMQANPEPPKKNNDKSKKISRKPLAAKNK</sequence>
<organism>
    <name type="scientific">Mus musculus</name>
    <name type="common">Mouse</name>
    <dbReference type="NCBI Taxonomy" id="10090"/>
    <lineage>
        <taxon>Eukaryota</taxon>
        <taxon>Metazoa</taxon>
        <taxon>Chordata</taxon>
        <taxon>Craniata</taxon>
        <taxon>Vertebrata</taxon>
        <taxon>Euteleostomi</taxon>
        <taxon>Mammalia</taxon>
        <taxon>Eutheria</taxon>
        <taxon>Euarchontoglires</taxon>
        <taxon>Glires</taxon>
        <taxon>Rodentia</taxon>
        <taxon>Myomorpha</taxon>
        <taxon>Muroidea</taxon>
        <taxon>Muridae</taxon>
        <taxon>Murinae</taxon>
        <taxon>Mus</taxon>
        <taxon>Mus</taxon>
    </lineage>
</organism>
<keyword id="KW-0007">Acetylation</keyword>
<keyword id="KW-0433">Leucine-rich repeat</keyword>
<keyword id="KW-1185">Reference proteome</keyword>
<keyword id="KW-0677">Repeat</keyword>
<comment type="function">
    <text>Potentially plays a role in the Ras signal transduction pathway. Capable of suppressing v-Ras transformation in vitro.</text>
</comment>
<name>RSU1_MOUSE</name>
<dbReference type="EMBL" id="X63039">
    <property type="protein sequence ID" value="CAA44765.1"/>
    <property type="molecule type" value="mRNA"/>
</dbReference>
<dbReference type="CCDS" id="CCDS15693.1"/>
<dbReference type="PIR" id="S25770">
    <property type="entry name" value="S25770"/>
</dbReference>
<dbReference type="SMR" id="Q01730"/>
<dbReference type="FunCoup" id="Q01730">
    <property type="interactions" value="729"/>
</dbReference>
<dbReference type="IntAct" id="Q01730">
    <property type="interactions" value="2"/>
</dbReference>
<dbReference type="MINT" id="Q01730"/>
<dbReference type="STRING" id="10090.ENSMUSP00000028059"/>
<dbReference type="iPTMnet" id="Q01730"/>
<dbReference type="PhosphoSitePlus" id="Q01730"/>
<dbReference type="jPOST" id="Q01730"/>
<dbReference type="PaxDb" id="10090-ENSMUSP00000028059"/>
<dbReference type="PeptideAtlas" id="Q01730"/>
<dbReference type="ProteomicsDB" id="262716"/>
<dbReference type="Pumba" id="Q01730"/>
<dbReference type="TopDownProteomics" id="Q01730"/>
<dbReference type="AGR" id="MGI:103040"/>
<dbReference type="MGI" id="MGI:103040">
    <property type="gene designation" value="Rsu1"/>
</dbReference>
<dbReference type="eggNOG" id="KOG0617">
    <property type="taxonomic scope" value="Eukaryota"/>
</dbReference>
<dbReference type="InParanoid" id="Q01730"/>
<dbReference type="OrthoDB" id="676979at2759"/>
<dbReference type="PhylomeDB" id="Q01730"/>
<dbReference type="Reactome" id="R-MMU-446388">
    <property type="pathway name" value="Regulation of cytoskeletal remodeling and cell spreading by IPP complex components"/>
</dbReference>
<dbReference type="ChiTaRS" id="Rsu1">
    <property type="organism name" value="mouse"/>
</dbReference>
<dbReference type="PRO" id="PR:Q01730"/>
<dbReference type="Proteomes" id="UP000000589">
    <property type="component" value="Unplaced"/>
</dbReference>
<dbReference type="RNAct" id="Q01730">
    <property type="molecule type" value="protein"/>
</dbReference>
<dbReference type="GO" id="GO:0061351">
    <property type="term" value="P:neural precursor cell proliferation"/>
    <property type="evidence" value="ECO:0000316"/>
    <property type="project" value="MGI"/>
</dbReference>
<dbReference type="GO" id="GO:2000179">
    <property type="term" value="P:positive regulation of neural precursor cell proliferation"/>
    <property type="evidence" value="ECO:0000316"/>
    <property type="project" value="MGI"/>
</dbReference>
<dbReference type="GO" id="GO:0007265">
    <property type="term" value="P:Ras protein signal transduction"/>
    <property type="evidence" value="ECO:0000315"/>
    <property type="project" value="MGI"/>
</dbReference>
<dbReference type="FunFam" id="3.80.10.10:FF:000034">
    <property type="entry name" value="Ras suppressor protein 1"/>
    <property type="match status" value="1"/>
</dbReference>
<dbReference type="FunFam" id="3.80.10.10:FF:000159">
    <property type="entry name" value="Ras suppressor protein 1"/>
    <property type="match status" value="1"/>
</dbReference>
<dbReference type="Gene3D" id="3.80.10.10">
    <property type="entry name" value="Ribonuclease Inhibitor"/>
    <property type="match status" value="2"/>
</dbReference>
<dbReference type="InterPro" id="IPR001611">
    <property type="entry name" value="Leu-rich_rpt"/>
</dbReference>
<dbReference type="InterPro" id="IPR003591">
    <property type="entry name" value="Leu-rich_rpt_typical-subtyp"/>
</dbReference>
<dbReference type="InterPro" id="IPR032675">
    <property type="entry name" value="LRR_dom_sf"/>
</dbReference>
<dbReference type="InterPro" id="IPR050216">
    <property type="entry name" value="LRR_domain-containing"/>
</dbReference>
<dbReference type="InterPro" id="IPR055414">
    <property type="entry name" value="LRR_R13L4/SHOC2-like"/>
</dbReference>
<dbReference type="PANTHER" id="PTHR48051">
    <property type="match status" value="1"/>
</dbReference>
<dbReference type="PANTHER" id="PTHR48051:SF1">
    <property type="entry name" value="RAS SUPPRESSOR PROTEIN 1"/>
    <property type="match status" value="1"/>
</dbReference>
<dbReference type="Pfam" id="PF23598">
    <property type="entry name" value="LRR_14"/>
    <property type="match status" value="1"/>
</dbReference>
<dbReference type="Pfam" id="PF13855">
    <property type="entry name" value="LRR_8"/>
    <property type="match status" value="1"/>
</dbReference>
<dbReference type="SMART" id="SM00364">
    <property type="entry name" value="LRR_BAC"/>
    <property type="match status" value="5"/>
</dbReference>
<dbReference type="SMART" id="SM00369">
    <property type="entry name" value="LRR_TYP"/>
    <property type="match status" value="6"/>
</dbReference>
<dbReference type="SUPFAM" id="SSF52058">
    <property type="entry name" value="L domain-like"/>
    <property type="match status" value="1"/>
</dbReference>
<dbReference type="PROSITE" id="PS51450">
    <property type="entry name" value="LRR"/>
    <property type="match status" value="7"/>
</dbReference>
<evidence type="ECO:0000250" key="1">
    <source>
        <dbReference type="UniProtKB" id="Q15404"/>
    </source>
</evidence>
<evidence type="ECO:0000256" key="2">
    <source>
        <dbReference type="SAM" id="MobiDB-lite"/>
    </source>
</evidence>
<feature type="initiator methionine" description="Removed" evidence="1">
    <location>
        <position position="1"/>
    </location>
</feature>
<feature type="chain" id="PRO_0000097500" description="Ras suppressor protein 1">
    <location>
        <begin position="2"/>
        <end position="277"/>
    </location>
</feature>
<feature type="repeat" description="LRR 1">
    <location>
        <begin position="41"/>
        <end position="63"/>
    </location>
</feature>
<feature type="repeat" description="LRR 2">
    <location>
        <begin position="64"/>
        <end position="85"/>
    </location>
</feature>
<feature type="repeat" description="LRR 3">
    <location>
        <begin position="87"/>
        <end position="108"/>
    </location>
</feature>
<feature type="repeat" description="LRR 4">
    <location>
        <begin position="110"/>
        <end position="133"/>
    </location>
</feature>
<feature type="repeat" description="LRR 5">
    <location>
        <begin position="135"/>
        <end position="156"/>
    </location>
</feature>
<feature type="repeat" description="LRR 6">
    <location>
        <begin position="158"/>
        <end position="179"/>
    </location>
</feature>
<feature type="repeat" description="LRR 7">
    <location>
        <begin position="181"/>
        <end position="202"/>
    </location>
</feature>
<feature type="region of interest" description="Disordered" evidence="2">
    <location>
        <begin position="1"/>
        <end position="23"/>
    </location>
</feature>
<feature type="region of interest" description="Disordered" evidence="2">
    <location>
        <begin position="250"/>
        <end position="277"/>
    </location>
</feature>
<feature type="compositionally biased region" description="Basic and acidic residues" evidence="2">
    <location>
        <begin position="7"/>
        <end position="23"/>
    </location>
</feature>
<feature type="compositionally biased region" description="Basic and acidic residues" evidence="2">
    <location>
        <begin position="256"/>
        <end position="265"/>
    </location>
</feature>
<feature type="modified residue" description="N-acetylserine" evidence="1">
    <location>
        <position position="2"/>
    </location>
</feature>
<protein>
    <recommendedName>
        <fullName>Ras suppressor protein 1</fullName>
        <shortName>RSP-1</shortName>
        <shortName>Rsu-1</shortName>
    </recommendedName>
</protein>
<proteinExistence type="evidence at protein level"/>
<accession>Q01730</accession>